<protein>
    <recommendedName>
        <fullName>Protein A30 homolog</fullName>
    </recommendedName>
</protein>
<evidence type="ECO:0000250" key="1"/>
<evidence type="ECO:0000305" key="2"/>
<name>A30_FOWPN</name>
<keyword id="KW-0597">Phosphoprotein</keyword>
<keyword id="KW-1185">Reference proteome</keyword>
<proteinExistence type="inferred from homology"/>
<feature type="chain" id="PRO_0000099308" description="Protein A30 homolog">
    <location>
        <begin position="1"/>
        <end position="74"/>
    </location>
</feature>
<gene>
    <name type="ordered locus">FPV194</name>
</gene>
<reference key="1">
    <citation type="journal article" date="2000" name="J. Virol.">
        <title>The genome of fowlpox virus.</title>
        <authorList>
            <person name="Afonso C.L."/>
            <person name="Tulman E.R."/>
            <person name="Lu Z."/>
            <person name="Zsak L."/>
            <person name="Kutish G.F."/>
            <person name="Rock D.L."/>
        </authorList>
    </citation>
    <scope>NUCLEOTIDE SEQUENCE [LARGE SCALE GENOMIC DNA]</scope>
</reference>
<sequence length="74" mass="8580">MDDIDYIDDINEDSINHMLSTLANVRDPEFSATISLMQEVLKIINSRIIEIDKKYKKNNRNINSMNNASSRVSY</sequence>
<organism>
    <name type="scientific">Fowlpox virus (strain NVSL)</name>
    <name type="common">FPV</name>
    <dbReference type="NCBI Taxonomy" id="928301"/>
    <lineage>
        <taxon>Viruses</taxon>
        <taxon>Varidnaviria</taxon>
        <taxon>Bamfordvirae</taxon>
        <taxon>Nucleocytoviricota</taxon>
        <taxon>Pokkesviricetes</taxon>
        <taxon>Chitovirales</taxon>
        <taxon>Poxviridae</taxon>
        <taxon>Chordopoxvirinae</taxon>
        <taxon>Avipoxvirus</taxon>
        <taxon>Fowlpox virus</taxon>
    </lineage>
</organism>
<organismHost>
    <name type="scientific">Vertebrata</name>
    <dbReference type="NCBI Taxonomy" id="7742"/>
</organismHost>
<comment type="function">
    <text evidence="1">Required for the association between the dense viroplasm and the viral membranes to form the mature virion (MV).</text>
</comment>
<comment type="subunit">
    <text evidence="1">Interacts with protein G7; the interaction stabilizes both proteins.</text>
</comment>
<comment type="PTM">
    <text evidence="1">Phosphorylated by viral F10 kinase.</text>
</comment>
<comment type="similarity">
    <text evidence="2">Belongs to the chordopoxvirinae A30 family.</text>
</comment>
<accession>Q9J539</accession>
<dbReference type="EMBL" id="AF198100">
    <property type="protein sequence ID" value="AAF44538.1"/>
    <property type="molecule type" value="Genomic_DNA"/>
</dbReference>
<dbReference type="RefSeq" id="NP_039157.1">
    <property type="nucleotide sequence ID" value="NC_002188.1"/>
</dbReference>
<dbReference type="GeneID" id="1486766"/>
<dbReference type="KEGG" id="vg:1486766"/>
<dbReference type="Proteomes" id="UP000008597">
    <property type="component" value="Segment"/>
</dbReference>
<dbReference type="InterPro" id="IPR009257">
    <property type="entry name" value="Chordopox_A30L"/>
</dbReference>
<dbReference type="Pfam" id="PF06015">
    <property type="entry name" value="Chordopox_A30L"/>
    <property type="match status" value="1"/>
</dbReference>